<protein>
    <recommendedName>
        <fullName>Hirudin-2'</fullName>
    </recommendedName>
    <alternativeName>
        <fullName>Hirudin II'</fullName>
    </alternativeName>
</protein>
<comment type="function">
    <text>Hirudin is a potent thrombin-specific protease inhibitor. It forms a stable non-covalent complex with alpha-thrombin, thereby abolishing its ability to cleave fibrinogen.</text>
</comment>
<comment type="subcellular location">
    <subcellularLocation>
        <location>Secreted</location>
    </subcellularLocation>
</comment>
<comment type="similarity">
    <text evidence="3">Belongs to the protease inhibitor I14 (hirudin) family.</text>
</comment>
<dbReference type="PIR" id="S05679">
    <property type="entry name" value="S05679"/>
</dbReference>
<dbReference type="PDB" id="1HAG">
    <property type="method" value="X-ray"/>
    <property type="resolution" value="2.00 A"/>
    <property type="chains" value="I=55-64"/>
</dbReference>
<dbReference type="PDB" id="1TBZ">
    <property type="method" value="X-ray"/>
    <property type="resolution" value="2.30 A"/>
    <property type="chains" value="I=54-64"/>
</dbReference>
<dbReference type="PDBsum" id="1HAG"/>
<dbReference type="PDBsum" id="1TBZ"/>
<dbReference type="SMR" id="P28505"/>
<dbReference type="Allergome" id="9843">
    <property type="allergen name" value="Hir me Hirudin"/>
</dbReference>
<dbReference type="EvolutionaryTrace" id="P28505"/>
<dbReference type="GO" id="GO:0005576">
    <property type="term" value="C:extracellular region"/>
    <property type="evidence" value="ECO:0007669"/>
    <property type="project" value="UniProtKB-SubCell"/>
</dbReference>
<dbReference type="GO" id="GO:0004867">
    <property type="term" value="F:serine-type endopeptidase inhibitor activity"/>
    <property type="evidence" value="ECO:0007669"/>
    <property type="project" value="UniProtKB-KW"/>
</dbReference>
<dbReference type="FunFam" id="2.70.10.10:FF:000001">
    <property type="entry name" value="Hirudin variant-1"/>
    <property type="match status" value="1"/>
</dbReference>
<dbReference type="Gene3D" id="2.70.10.10">
    <property type="entry name" value="Thrombin Inhibitor (Hirudin), subunit I"/>
    <property type="match status" value="1"/>
</dbReference>
<dbReference type="InterPro" id="IPR024793">
    <property type="entry name" value="Hirudin"/>
</dbReference>
<dbReference type="InterPro" id="IPR011061">
    <property type="entry name" value="Hirudin/antistatin"/>
</dbReference>
<dbReference type="InterPro" id="IPR000429">
    <property type="entry name" value="Prot_inh_hirudin"/>
</dbReference>
<dbReference type="Pfam" id="PF00713">
    <property type="entry name" value="Hirudin"/>
    <property type="match status" value="1"/>
</dbReference>
<dbReference type="PIRSF" id="PIRSF001640">
    <property type="entry name" value="Hirudin"/>
    <property type="match status" value="1"/>
</dbReference>
<dbReference type="PRINTS" id="PR00777">
    <property type="entry name" value="HIRUDIN"/>
</dbReference>
<dbReference type="SUPFAM" id="SSF57262">
    <property type="entry name" value="Leech antihemostatic proteins"/>
    <property type="match status" value="1"/>
</dbReference>
<reference key="1">
    <citation type="journal article" date="1989" name="FEBS Lett.">
        <title>Primary structures of new 'iso-hirudins'.</title>
        <authorList>
            <person name="Scharf M."/>
            <person name="Engels J."/>
            <person name="Tripier D."/>
        </authorList>
    </citation>
    <scope>PROTEIN SEQUENCE</scope>
</reference>
<name>HIR2P_HIRME</name>
<sequence length="65" mass="6987">ITYTDCTESGQDLCLCEGSDVCGKGNKCILGSNGEENQCVTGEGTPKPQSHNDGDFEEIPEEYLQ</sequence>
<feature type="chain" id="PRO_0000195645" description="Hirudin-2'">
    <location>
        <begin position="1"/>
        <end position="65"/>
    </location>
</feature>
<feature type="region of interest" description="Interaction with thrombin active site" evidence="1">
    <location>
        <begin position="1"/>
        <end position="3"/>
    </location>
</feature>
<feature type="region of interest" description="Disordered" evidence="2">
    <location>
        <begin position="39"/>
        <end position="65"/>
    </location>
</feature>
<feature type="region of interest" description="Interaction with fibrinogen-binding exosite of thrombin" evidence="1">
    <location>
        <begin position="55"/>
        <end position="65"/>
    </location>
</feature>
<feature type="compositionally biased region" description="Acidic residues" evidence="2">
    <location>
        <begin position="55"/>
        <end position="65"/>
    </location>
</feature>
<feature type="modified residue" description="Sulfotyrosine" evidence="1">
    <location>
        <position position="63"/>
    </location>
</feature>
<feature type="glycosylation site" description="O-linked (GalNAc...) threonine" evidence="1">
    <location>
        <position position="45"/>
    </location>
</feature>
<feature type="disulfide bond" evidence="1">
    <location>
        <begin position="6"/>
        <end position="14"/>
    </location>
</feature>
<feature type="disulfide bond" evidence="1">
    <location>
        <begin position="16"/>
        <end position="28"/>
    </location>
</feature>
<feature type="disulfide bond" evidence="1">
    <location>
        <begin position="22"/>
        <end position="39"/>
    </location>
</feature>
<feature type="helix" evidence="4">
    <location>
        <begin position="61"/>
        <end position="63"/>
    </location>
</feature>
<evidence type="ECO:0000250" key="1"/>
<evidence type="ECO:0000256" key="2">
    <source>
        <dbReference type="SAM" id="MobiDB-lite"/>
    </source>
</evidence>
<evidence type="ECO:0000305" key="3"/>
<evidence type="ECO:0007829" key="4">
    <source>
        <dbReference type="PDB" id="1HAG"/>
    </source>
</evidence>
<keyword id="KW-0002">3D-structure</keyword>
<keyword id="KW-0903">Direct protein sequencing</keyword>
<keyword id="KW-1015">Disulfide bond</keyword>
<keyword id="KW-0325">Glycoprotein</keyword>
<keyword id="KW-0646">Protease inhibitor</keyword>
<keyword id="KW-0964">Secreted</keyword>
<keyword id="KW-0722">Serine protease inhibitor</keyword>
<keyword id="KW-0765">Sulfation</keyword>
<accession>P28505</accession>
<organism>
    <name type="scientific">Hirudo medicinalis</name>
    <name type="common">Medicinal leech</name>
    <dbReference type="NCBI Taxonomy" id="6421"/>
    <lineage>
        <taxon>Eukaryota</taxon>
        <taxon>Metazoa</taxon>
        <taxon>Spiralia</taxon>
        <taxon>Lophotrochozoa</taxon>
        <taxon>Annelida</taxon>
        <taxon>Clitellata</taxon>
        <taxon>Hirudinea</taxon>
        <taxon>Hirudinida</taxon>
        <taxon>Hirudiniformes</taxon>
        <taxon>Hirudinidae</taxon>
        <taxon>Hirudo</taxon>
    </lineage>
</organism>
<proteinExistence type="evidence at protein level"/>